<keyword id="KW-0328">Glycosyltransferase</keyword>
<keyword id="KW-0448">Lipopolysaccharide biosynthesis</keyword>
<keyword id="KW-0808">Transferase</keyword>
<sequence length="318" mass="37737">MWEKCHRQWHKIKFYVKHAHLGLLPPAWLAKSAAAELERFERAPAELRAAIENRVHYYNALSQPFFLPETAPRVCHFPRQKPSSYYYDLKALLRYFPLEQRFSAQFGDVTTIPELPQFVKSRPITKNNENAVLLKLDSVRHFYLYPDRLPFRAKKSQLVWRGAAHQNHRIRFLEHFHQHPLCDVGCIHARSAAKPYHREFMSVKRQLQYRYILSLEGNDVATNLKWIMASNSLCLMPAPRYETWMMEGRLQAGVHYVQLRDDFADLEEQILFFERYPEAAEAIIKNAQQWMSQFARPETELWTALLVMKKYFSLLEPQ</sequence>
<organism>
    <name type="scientific">Dichelobacter nodosus</name>
    <name type="common">Bacteroides nodosus</name>
    <dbReference type="NCBI Taxonomy" id="870"/>
    <lineage>
        <taxon>Bacteria</taxon>
        <taxon>Pseudomonadati</taxon>
        <taxon>Pseudomonadota</taxon>
        <taxon>Gammaproteobacteria</taxon>
        <taxon>Cardiobacteriales</taxon>
        <taxon>Cardiobacteriaceae</taxon>
        <taxon>Dichelobacter</taxon>
    </lineage>
</organism>
<comment type="function">
    <text>Involved in lipopolysaccharide core biosynthesis.</text>
</comment>
<comment type="pathway">
    <text>Protein modification; protein glycosylation.</text>
</comment>
<comment type="similarity">
    <text evidence="1">Belongs to the glycosyltransferase 90 family.</text>
</comment>
<feature type="chain" id="PRO_0000084468" description="O-glucosyltransferase LpsA">
    <location>
        <begin position="1"/>
        <end position="318"/>
    </location>
</feature>
<name>LPSA_DICNO</name>
<accession>P39907</accession>
<gene>
    <name type="primary">lpsA</name>
</gene>
<proteinExistence type="inferred from homology"/>
<reference key="1">
    <citation type="journal article" date="1995" name="Microbiology">
        <title>A gene region in Dichelobacter nodosus encoding a lipopolysaccharide epitope.</title>
        <authorList>
            <person name="Billington S.J."/>
            <person name="Jost B.H."/>
            <person name="Rood J.I."/>
        </authorList>
    </citation>
    <scope>NUCLEOTIDE SEQUENCE [GENOMIC DNA]</scope>
    <source>
        <strain>A198</strain>
    </source>
</reference>
<dbReference type="EC" id="2.4.1.-"/>
<dbReference type="EMBL" id="U06471">
    <property type="protein sequence ID" value="AAC43386.1"/>
    <property type="molecule type" value="Genomic_DNA"/>
</dbReference>
<dbReference type="RefSeq" id="WP_012030835.1">
    <property type="nucleotide sequence ID" value="NZ_SRJB01000010.1"/>
</dbReference>
<dbReference type="SMR" id="P39907"/>
<dbReference type="OMA" id="KWIMASN"/>
<dbReference type="UniPathway" id="UPA00378"/>
<dbReference type="GO" id="GO:0016757">
    <property type="term" value="F:glycosyltransferase activity"/>
    <property type="evidence" value="ECO:0007669"/>
    <property type="project" value="UniProtKB-KW"/>
</dbReference>
<dbReference type="GO" id="GO:0009103">
    <property type="term" value="P:lipopolysaccharide biosynthetic process"/>
    <property type="evidence" value="ECO:0007669"/>
    <property type="project" value="UniProtKB-KW"/>
</dbReference>
<dbReference type="GO" id="GO:0006486">
    <property type="term" value="P:protein glycosylation"/>
    <property type="evidence" value="ECO:0007669"/>
    <property type="project" value="UniProtKB-UniPathway"/>
</dbReference>
<dbReference type="InterPro" id="IPR006598">
    <property type="entry name" value="CAP10"/>
</dbReference>
<dbReference type="InterPro" id="IPR051091">
    <property type="entry name" value="O-Glucosyltr/Glycosyltrsf_90"/>
</dbReference>
<dbReference type="PANTHER" id="PTHR12203">
    <property type="entry name" value="KDEL LYS-ASP-GLU-LEU CONTAINING - RELATED"/>
    <property type="match status" value="1"/>
</dbReference>
<dbReference type="PANTHER" id="PTHR12203:SF35">
    <property type="entry name" value="PROTEIN O-GLUCOSYLTRANSFERASE 1"/>
    <property type="match status" value="1"/>
</dbReference>
<dbReference type="Pfam" id="PF05686">
    <property type="entry name" value="Glyco_transf_90"/>
    <property type="match status" value="1"/>
</dbReference>
<dbReference type="SMART" id="SM00672">
    <property type="entry name" value="CAP10"/>
    <property type="match status" value="1"/>
</dbReference>
<evidence type="ECO:0000305" key="1"/>
<protein>
    <recommendedName>
        <fullName>O-glucosyltransferase LpsA</fullName>
        <ecNumber>2.4.1.-</ecNumber>
    </recommendedName>
</protein>